<comment type="function">
    <text evidence="1 2">Broad-specificity nucleoside monophosphate (NMP) kinase that catalyzes the reversible transfer of the terminal phosphate group between nucleoside triphosphates and monophosphates (PubMed:18294127). Also has ATPase activity. Involved in the late cytoplasmic maturation steps of the 40S ribosomal particles, specifically 18S rRNA maturation. While NMP activity is not required for ribosome maturation, ATPase activity is. Associates transiently with small ribosomal subunit protein uS11. ATP hydrolysis breaks the interaction with uS11. May temporarily remove uS11 from the ribosome to enable a conformational change of the ribosomal RNA that is needed for the final maturation step of the small ribosomal subunit. Its NMP activity may have a role in nuclear energy homeostasis (By similarity). AMP is the best phosphate acceptor, and CMP is also a good substrate. All nucleoside triphosphates ATP, TTP, CTP, GTP, and UTP are accepted as phosphate donors. ATP is the best phosphate donor (PubMed:18294127).</text>
</comment>
<comment type="catalytic activity">
    <reaction evidence="1 2">
        <text>AMP + ATP = 2 ADP</text>
        <dbReference type="Rhea" id="RHEA:12973"/>
        <dbReference type="ChEBI" id="CHEBI:30616"/>
        <dbReference type="ChEBI" id="CHEBI:456215"/>
        <dbReference type="ChEBI" id="CHEBI:456216"/>
        <dbReference type="EC" id="2.7.4.3"/>
    </reaction>
</comment>
<comment type="catalytic activity">
    <reaction evidence="1">
        <text>ATP + H2O = ADP + phosphate + H(+)</text>
        <dbReference type="Rhea" id="RHEA:13065"/>
        <dbReference type="ChEBI" id="CHEBI:15377"/>
        <dbReference type="ChEBI" id="CHEBI:15378"/>
        <dbReference type="ChEBI" id="CHEBI:30616"/>
        <dbReference type="ChEBI" id="CHEBI:43474"/>
        <dbReference type="ChEBI" id="CHEBI:456216"/>
    </reaction>
</comment>
<comment type="subunit">
    <text evidence="1 2">Monomer and homodimer (PubMed:18294127). Interacts with small ribosomal subunit protein uS11. Not a structural component of 43S pre-ribosomes, but transiently interacts with them by binding to uS11.</text>
</comment>
<comment type="subcellular location">
    <subcellularLocation>
        <location evidence="1">Cytoplasm</location>
    </subcellularLocation>
    <subcellularLocation>
        <location evidence="1">Nucleus</location>
    </subcellularLocation>
</comment>
<comment type="similarity">
    <text evidence="1">Belongs to the adenylate kinase family. AK6 subfamily.</text>
</comment>
<keyword id="KW-0067">ATP-binding</keyword>
<keyword id="KW-0963">Cytoplasm</keyword>
<keyword id="KW-0418">Kinase</keyword>
<keyword id="KW-0547">Nucleotide-binding</keyword>
<keyword id="KW-0539">Nucleus</keyword>
<keyword id="KW-1185">Reference proteome</keyword>
<keyword id="KW-0690">Ribosome biogenesis</keyword>
<keyword id="KW-0698">rRNA processing</keyword>
<keyword id="KW-0808">Transferase</keyword>
<sequence>MSEPEPDVKPNILITGTPGAGKSYLCERIASELKFEWLDCSKIAKEKNFVEEYDEEYDCPILDEEKLMDHLEPLMAKGGNVVEYHGCDFFPERWFQAVFVVTCPNTTLYDRLKERNYNEKKLASNIQCEIFGTILEEARDSYKSDIVFELKGETKADAHISIKTVKNWYRMWKRK</sequence>
<dbReference type="EC" id="2.7.4.3" evidence="1"/>
<dbReference type="EMBL" id="AE013599">
    <property type="protein sequence ID" value="AAF58491.1"/>
    <property type="molecule type" value="Genomic_DNA"/>
</dbReference>
<dbReference type="EMBL" id="AY071739">
    <property type="protein sequence ID" value="AAL49361.1"/>
    <property type="molecule type" value="mRNA"/>
</dbReference>
<dbReference type="RefSeq" id="NP_610797.1">
    <property type="nucleotide sequence ID" value="NM_136953.4"/>
</dbReference>
<dbReference type="SMR" id="Q7JYV7"/>
<dbReference type="BioGRID" id="62153">
    <property type="interactions" value="8"/>
</dbReference>
<dbReference type="FunCoup" id="Q7JYV7">
    <property type="interactions" value="2023"/>
</dbReference>
<dbReference type="IntAct" id="Q7JYV7">
    <property type="interactions" value="6"/>
</dbReference>
<dbReference type="STRING" id="7227.FBpp0087004"/>
<dbReference type="PaxDb" id="7227-FBpp0087004"/>
<dbReference type="DNASU" id="36379"/>
<dbReference type="EnsemblMetazoa" id="FBtr0087891">
    <property type="protein sequence ID" value="FBpp0087004"/>
    <property type="gene ID" value="FBgn0033754"/>
</dbReference>
<dbReference type="GeneID" id="36379"/>
<dbReference type="KEGG" id="dme:Dmel_CG8816"/>
<dbReference type="UCSC" id="CG8816-RA">
    <property type="organism name" value="d. melanogaster"/>
</dbReference>
<dbReference type="AGR" id="FB:FBgn0033754"/>
<dbReference type="CTD" id="102157402"/>
<dbReference type="FlyBase" id="FBgn0033754">
    <property type="gene designation" value="Ak6"/>
</dbReference>
<dbReference type="VEuPathDB" id="VectorBase:FBgn0033754"/>
<dbReference type="eggNOG" id="KOG3347">
    <property type="taxonomic scope" value="Eukaryota"/>
</dbReference>
<dbReference type="GeneTree" id="ENSGT00390000015930"/>
<dbReference type="HOGENOM" id="CLU_079096_3_1_1"/>
<dbReference type="InParanoid" id="Q7JYV7"/>
<dbReference type="OMA" id="QCEIFGT"/>
<dbReference type="OrthoDB" id="10251185at2759"/>
<dbReference type="PhylomeDB" id="Q7JYV7"/>
<dbReference type="Reactome" id="R-DME-499943">
    <property type="pathway name" value="Interconversion of nucleotide di- and triphosphates"/>
</dbReference>
<dbReference type="BioGRID-ORCS" id="36379">
    <property type="hits" value="1 hit in 3 CRISPR screens"/>
</dbReference>
<dbReference type="GenomeRNAi" id="36379"/>
<dbReference type="PRO" id="PR:Q7JYV7"/>
<dbReference type="Proteomes" id="UP000000803">
    <property type="component" value="Chromosome 2R"/>
</dbReference>
<dbReference type="Bgee" id="FBgn0033754">
    <property type="expression patterns" value="Expressed in eye disc (Drosophila) and 63 other cell types or tissues"/>
</dbReference>
<dbReference type="GO" id="GO:0005737">
    <property type="term" value="C:cytoplasm"/>
    <property type="evidence" value="ECO:0000318"/>
    <property type="project" value="GO_Central"/>
</dbReference>
<dbReference type="GO" id="GO:0005634">
    <property type="term" value="C:nucleus"/>
    <property type="evidence" value="ECO:0000314"/>
    <property type="project" value="FlyBase"/>
</dbReference>
<dbReference type="GO" id="GO:0004017">
    <property type="term" value="F:adenylate kinase activity"/>
    <property type="evidence" value="ECO:0000314"/>
    <property type="project" value="FlyBase"/>
</dbReference>
<dbReference type="GO" id="GO:0005524">
    <property type="term" value="F:ATP binding"/>
    <property type="evidence" value="ECO:0000318"/>
    <property type="project" value="GO_Central"/>
</dbReference>
<dbReference type="GO" id="GO:0016887">
    <property type="term" value="F:ATP hydrolysis activity"/>
    <property type="evidence" value="ECO:0007669"/>
    <property type="project" value="UniProtKB-UniRule"/>
</dbReference>
<dbReference type="GO" id="GO:0042274">
    <property type="term" value="P:ribosomal small subunit biogenesis"/>
    <property type="evidence" value="ECO:0007669"/>
    <property type="project" value="UniProtKB-UniRule"/>
</dbReference>
<dbReference type="GO" id="GO:0006364">
    <property type="term" value="P:rRNA processing"/>
    <property type="evidence" value="ECO:0007669"/>
    <property type="project" value="UniProtKB-KW"/>
</dbReference>
<dbReference type="FunFam" id="3.40.50.300:FF:000372">
    <property type="entry name" value="Adenylate kinase isoenzyme 6 homolog"/>
    <property type="match status" value="1"/>
</dbReference>
<dbReference type="Gene3D" id="3.40.50.300">
    <property type="entry name" value="P-loop containing nucleotide triphosphate hydrolases"/>
    <property type="match status" value="1"/>
</dbReference>
<dbReference type="HAMAP" id="MF_00039">
    <property type="entry name" value="Adenylate_kinase_AK6"/>
    <property type="match status" value="1"/>
</dbReference>
<dbReference type="InterPro" id="IPR020618">
    <property type="entry name" value="Adenyl_kinase_AK6"/>
</dbReference>
<dbReference type="InterPro" id="IPR027417">
    <property type="entry name" value="P-loop_NTPase"/>
</dbReference>
<dbReference type="PANTHER" id="PTHR12595:SF0">
    <property type="entry name" value="ADENYLATE KINASE ISOENZYME 6"/>
    <property type="match status" value="1"/>
</dbReference>
<dbReference type="PANTHER" id="PTHR12595">
    <property type="entry name" value="POS9-ACTIVATING FACTOR FAP7-RELATED"/>
    <property type="match status" value="1"/>
</dbReference>
<dbReference type="Pfam" id="PF13238">
    <property type="entry name" value="AAA_18"/>
    <property type="match status" value="1"/>
</dbReference>
<dbReference type="SUPFAM" id="SSF52540">
    <property type="entry name" value="P-loop containing nucleoside triphosphate hydrolases"/>
    <property type="match status" value="1"/>
</dbReference>
<accession>Q7JYV7</accession>
<name>KAD6_DROME</name>
<protein>
    <recommendedName>
        <fullName evidence="1">Adenylate kinase isoenzyme 6 homolog</fullName>
        <shortName evidence="1">AK6</shortName>
        <shortName>DAK6</shortName>
        <ecNumber evidence="1">2.7.4.3</ecNumber>
    </recommendedName>
    <alternativeName>
        <fullName evidence="1">Dual activity adenylate kinase/ATPase</fullName>
        <shortName evidence="1">AK/ATPase</shortName>
    </alternativeName>
</protein>
<evidence type="ECO:0000255" key="1">
    <source>
        <dbReference type="HAMAP-Rule" id="MF_03173"/>
    </source>
</evidence>
<evidence type="ECO:0000269" key="2">
    <source>
    </source>
</evidence>
<proteinExistence type="evidence at protein level"/>
<reference key="1">
    <citation type="journal article" date="2000" name="Science">
        <title>The genome sequence of Drosophila melanogaster.</title>
        <authorList>
            <person name="Adams M.D."/>
            <person name="Celniker S.E."/>
            <person name="Holt R.A."/>
            <person name="Evans C.A."/>
            <person name="Gocayne J.D."/>
            <person name="Amanatides P.G."/>
            <person name="Scherer S.E."/>
            <person name="Li P.W."/>
            <person name="Hoskins R.A."/>
            <person name="Galle R.F."/>
            <person name="George R.A."/>
            <person name="Lewis S.E."/>
            <person name="Richards S."/>
            <person name="Ashburner M."/>
            <person name="Henderson S.N."/>
            <person name="Sutton G.G."/>
            <person name="Wortman J.R."/>
            <person name="Yandell M.D."/>
            <person name="Zhang Q."/>
            <person name="Chen L.X."/>
            <person name="Brandon R.C."/>
            <person name="Rogers Y.-H.C."/>
            <person name="Blazej R.G."/>
            <person name="Champe M."/>
            <person name="Pfeiffer B.D."/>
            <person name="Wan K.H."/>
            <person name="Doyle C."/>
            <person name="Baxter E.G."/>
            <person name="Helt G."/>
            <person name="Nelson C.R."/>
            <person name="Miklos G.L.G."/>
            <person name="Abril J.F."/>
            <person name="Agbayani A."/>
            <person name="An H.-J."/>
            <person name="Andrews-Pfannkoch C."/>
            <person name="Baldwin D."/>
            <person name="Ballew R.M."/>
            <person name="Basu A."/>
            <person name="Baxendale J."/>
            <person name="Bayraktaroglu L."/>
            <person name="Beasley E.M."/>
            <person name="Beeson K.Y."/>
            <person name="Benos P.V."/>
            <person name="Berman B.P."/>
            <person name="Bhandari D."/>
            <person name="Bolshakov S."/>
            <person name="Borkova D."/>
            <person name="Botchan M.R."/>
            <person name="Bouck J."/>
            <person name="Brokstein P."/>
            <person name="Brottier P."/>
            <person name="Burtis K.C."/>
            <person name="Busam D.A."/>
            <person name="Butler H."/>
            <person name="Cadieu E."/>
            <person name="Center A."/>
            <person name="Chandra I."/>
            <person name="Cherry J.M."/>
            <person name="Cawley S."/>
            <person name="Dahlke C."/>
            <person name="Davenport L.B."/>
            <person name="Davies P."/>
            <person name="de Pablos B."/>
            <person name="Delcher A."/>
            <person name="Deng Z."/>
            <person name="Mays A.D."/>
            <person name="Dew I."/>
            <person name="Dietz S.M."/>
            <person name="Dodson K."/>
            <person name="Doup L.E."/>
            <person name="Downes M."/>
            <person name="Dugan-Rocha S."/>
            <person name="Dunkov B.C."/>
            <person name="Dunn P."/>
            <person name="Durbin K.J."/>
            <person name="Evangelista C.C."/>
            <person name="Ferraz C."/>
            <person name="Ferriera S."/>
            <person name="Fleischmann W."/>
            <person name="Fosler C."/>
            <person name="Gabrielian A.E."/>
            <person name="Garg N.S."/>
            <person name="Gelbart W.M."/>
            <person name="Glasser K."/>
            <person name="Glodek A."/>
            <person name="Gong F."/>
            <person name="Gorrell J.H."/>
            <person name="Gu Z."/>
            <person name="Guan P."/>
            <person name="Harris M."/>
            <person name="Harris N.L."/>
            <person name="Harvey D.A."/>
            <person name="Heiman T.J."/>
            <person name="Hernandez J.R."/>
            <person name="Houck J."/>
            <person name="Hostin D."/>
            <person name="Houston K.A."/>
            <person name="Howland T.J."/>
            <person name="Wei M.-H."/>
            <person name="Ibegwam C."/>
            <person name="Jalali M."/>
            <person name="Kalush F."/>
            <person name="Karpen G.H."/>
            <person name="Ke Z."/>
            <person name="Kennison J.A."/>
            <person name="Ketchum K.A."/>
            <person name="Kimmel B.E."/>
            <person name="Kodira C.D."/>
            <person name="Kraft C.L."/>
            <person name="Kravitz S."/>
            <person name="Kulp D."/>
            <person name="Lai Z."/>
            <person name="Lasko P."/>
            <person name="Lei Y."/>
            <person name="Levitsky A.A."/>
            <person name="Li J.H."/>
            <person name="Li Z."/>
            <person name="Liang Y."/>
            <person name="Lin X."/>
            <person name="Liu X."/>
            <person name="Mattei B."/>
            <person name="McIntosh T.C."/>
            <person name="McLeod M.P."/>
            <person name="McPherson D."/>
            <person name="Merkulov G."/>
            <person name="Milshina N.V."/>
            <person name="Mobarry C."/>
            <person name="Morris J."/>
            <person name="Moshrefi A."/>
            <person name="Mount S.M."/>
            <person name="Moy M."/>
            <person name="Murphy B."/>
            <person name="Murphy L."/>
            <person name="Muzny D.M."/>
            <person name="Nelson D.L."/>
            <person name="Nelson D.R."/>
            <person name="Nelson K.A."/>
            <person name="Nixon K."/>
            <person name="Nusskern D.R."/>
            <person name="Pacleb J.M."/>
            <person name="Palazzolo M."/>
            <person name="Pittman G.S."/>
            <person name="Pan S."/>
            <person name="Pollard J."/>
            <person name="Puri V."/>
            <person name="Reese M.G."/>
            <person name="Reinert K."/>
            <person name="Remington K."/>
            <person name="Saunders R.D.C."/>
            <person name="Scheeler F."/>
            <person name="Shen H."/>
            <person name="Shue B.C."/>
            <person name="Siden-Kiamos I."/>
            <person name="Simpson M."/>
            <person name="Skupski M.P."/>
            <person name="Smith T.J."/>
            <person name="Spier E."/>
            <person name="Spradling A.C."/>
            <person name="Stapleton M."/>
            <person name="Strong R."/>
            <person name="Sun E."/>
            <person name="Svirskas R."/>
            <person name="Tector C."/>
            <person name="Turner R."/>
            <person name="Venter E."/>
            <person name="Wang A.H."/>
            <person name="Wang X."/>
            <person name="Wang Z.-Y."/>
            <person name="Wassarman D.A."/>
            <person name="Weinstock G.M."/>
            <person name="Weissenbach J."/>
            <person name="Williams S.M."/>
            <person name="Woodage T."/>
            <person name="Worley K.C."/>
            <person name="Wu D."/>
            <person name="Yang S."/>
            <person name="Yao Q.A."/>
            <person name="Ye J."/>
            <person name="Yeh R.-F."/>
            <person name="Zaveri J.S."/>
            <person name="Zhan M."/>
            <person name="Zhang G."/>
            <person name="Zhao Q."/>
            <person name="Zheng L."/>
            <person name="Zheng X.H."/>
            <person name="Zhong F.N."/>
            <person name="Zhong W."/>
            <person name="Zhou X."/>
            <person name="Zhu S.C."/>
            <person name="Zhu X."/>
            <person name="Smith H.O."/>
            <person name="Gibbs R.A."/>
            <person name="Myers E.W."/>
            <person name="Rubin G.M."/>
            <person name="Venter J.C."/>
        </authorList>
    </citation>
    <scope>NUCLEOTIDE SEQUENCE [LARGE SCALE GENOMIC DNA]</scope>
    <source>
        <strain>Berkeley</strain>
    </source>
</reference>
<reference key="2">
    <citation type="journal article" date="2002" name="Genome Biol.">
        <title>Annotation of the Drosophila melanogaster euchromatic genome: a systematic review.</title>
        <authorList>
            <person name="Misra S."/>
            <person name="Crosby M.A."/>
            <person name="Mungall C.J."/>
            <person name="Matthews B.B."/>
            <person name="Campbell K.S."/>
            <person name="Hradecky P."/>
            <person name="Huang Y."/>
            <person name="Kaminker J.S."/>
            <person name="Millburn G.H."/>
            <person name="Prochnik S.E."/>
            <person name="Smith C.D."/>
            <person name="Tupy J.L."/>
            <person name="Whitfield E.J."/>
            <person name="Bayraktaroglu L."/>
            <person name="Berman B.P."/>
            <person name="Bettencourt B.R."/>
            <person name="Celniker S.E."/>
            <person name="de Grey A.D.N.J."/>
            <person name="Drysdale R.A."/>
            <person name="Harris N.L."/>
            <person name="Richter J."/>
            <person name="Russo S."/>
            <person name="Schroeder A.J."/>
            <person name="Shu S.Q."/>
            <person name="Stapleton M."/>
            <person name="Yamada C."/>
            <person name="Ashburner M."/>
            <person name="Gelbart W.M."/>
            <person name="Rubin G.M."/>
            <person name="Lewis S.E."/>
        </authorList>
    </citation>
    <scope>GENOME REANNOTATION</scope>
    <source>
        <strain>Berkeley</strain>
    </source>
</reference>
<reference key="3">
    <citation type="journal article" date="2002" name="Genome Biol.">
        <title>A Drosophila full-length cDNA resource.</title>
        <authorList>
            <person name="Stapleton M."/>
            <person name="Carlson J.W."/>
            <person name="Brokstein P."/>
            <person name="Yu C."/>
            <person name="Champe M."/>
            <person name="George R.A."/>
            <person name="Guarin H."/>
            <person name="Kronmiller B."/>
            <person name="Pacleb J.M."/>
            <person name="Park S."/>
            <person name="Wan K.H."/>
            <person name="Rubin G.M."/>
            <person name="Celniker S.E."/>
        </authorList>
    </citation>
    <scope>NUCLEOTIDE SEQUENCE [LARGE SCALE MRNA]</scope>
    <source>
        <strain>Berkeley</strain>
        <tissue>Head</tissue>
    </source>
</reference>
<reference key="4">
    <citation type="journal article" date="2008" name="Biochemistry (Mosc.)">
        <title>Identification of a novel nuclear-localized adenylate kinase from Drosophila melanogaster.</title>
        <authorList>
            <person name="Meng G."/>
            <person name="Zhai R."/>
            <person name="Liu B."/>
            <person name="Zheng X."/>
        </authorList>
    </citation>
    <scope>FUNCTION</scope>
    <scope>CATALYTIC ACTIVITY</scope>
    <scope>SUBUNIT</scope>
    <scope>SUBCELLULAR LOCATION</scope>
</reference>
<gene>
    <name type="primary">Ak6</name>
    <name type="ORF">CG8816</name>
</gene>
<organism>
    <name type="scientific">Drosophila melanogaster</name>
    <name type="common">Fruit fly</name>
    <dbReference type="NCBI Taxonomy" id="7227"/>
    <lineage>
        <taxon>Eukaryota</taxon>
        <taxon>Metazoa</taxon>
        <taxon>Ecdysozoa</taxon>
        <taxon>Arthropoda</taxon>
        <taxon>Hexapoda</taxon>
        <taxon>Insecta</taxon>
        <taxon>Pterygota</taxon>
        <taxon>Neoptera</taxon>
        <taxon>Endopterygota</taxon>
        <taxon>Diptera</taxon>
        <taxon>Brachycera</taxon>
        <taxon>Muscomorpha</taxon>
        <taxon>Ephydroidea</taxon>
        <taxon>Drosophilidae</taxon>
        <taxon>Drosophila</taxon>
        <taxon>Sophophora</taxon>
    </lineage>
</organism>
<feature type="chain" id="PRO_0000422287" description="Adenylate kinase isoenzyme 6 homolog">
    <location>
        <begin position="1"/>
        <end position="175"/>
    </location>
</feature>
<feature type="region of interest" description="NMPbind" evidence="1">
    <location>
        <begin position="39"/>
        <end position="62"/>
    </location>
</feature>
<feature type="region of interest" description="LID" evidence="1">
    <location>
        <begin position="114"/>
        <end position="124"/>
    </location>
</feature>
<feature type="binding site" evidence="1">
    <location>
        <position position="19"/>
    </location>
    <ligand>
        <name>ATP</name>
        <dbReference type="ChEBI" id="CHEBI:30616"/>
    </ligand>
</feature>
<feature type="binding site" evidence="1">
    <location>
        <position position="21"/>
    </location>
    <ligand>
        <name>ATP</name>
        <dbReference type="ChEBI" id="CHEBI:30616"/>
    </ligand>
</feature>
<feature type="binding site" evidence="1">
    <location>
        <position position="22"/>
    </location>
    <ligand>
        <name>ATP</name>
        <dbReference type="ChEBI" id="CHEBI:30616"/>
    </ligand>
</feature>
<feature type="binding site" evidence="1">
    <location>
        <position position="23"/>
    </location>
    <ligand>
        <name>ATP</name>
        <dbReference type="ChEBI" id="CHEBI:30616"/>
    </ligand>
</feature>
<feature type="binding site" evidence="1">
    <location>
        <position position="24"/>
    </location>
    <ligand>
        <name>ATP</name>
        <dbReference type="ChEBI" id="CHEBI:30616"/>
    </ligand>
</feature>
<feature type="binding site" evidence="1">
    <location>
        <position position="115"/>
    </location>
    <ligand>
        <name>ATP</name>
        <dbReference type="ChEBI" id="CHEBI:30616"/>
    </ligand>
</feature>